<accession>Q04A69</accession>
<dbReference type="EC" id="6.3.1.1" evidence="1"/>
<dbReference type="EMBL" id="CP000412">
    <property type="protein sequence ID" value="ABJ58653.1"/>
    <property type="molecule type" value="Genomic_DNA"/>
</dbReference>
<dbReference type="RefSeq" id="WP_011678323.1">
    <property type="nucleotide sequence ID" value="NC_008529.1"/>
</dbReference>
<dbReference type="SMR" id="Q04A69"/>
<dbReference type="KEGG" id="lbu:LBUL_1110"/>
<dbReference type="HOGENOM" id="CLU_071543_0_0_9"/>
<dbReference type="BioCyc" id="LDEL321956:LBUL_RS05215-MONOMER"/>
<dbReference type="UniPathway" id="UPA00134">
    <property type="reaction ID" value="UER00194"/>
</dbReference>
<dbReference type="GO" id="GO:0005829">
    <property type="term" value="C:cytosol"/>
    <property type="evidence" value="ECO:0007669"/>
    <property type="project" value="TreeGrafter"/>
</dbReference>
<dbReference type="GO" id="GO:0004071">
    <property type="term" value="F:aspartate-ammonia ligase activity"/>
    <property type="evidence" value="ECO:0007669"/>
    <property type="project" value="UniProtKB-UniRule"/>
</dbReference>
<dbReference type="GO" id="GO:0005524">
    <property type="term" value="F:ATP binding"/>
    <property type="evidence" value="ECO:0007669"/>
    <property type="project" value="UniProtKB-UniRule"/>
</dbReference>
<dbReference type="GO" id="GO:0140096">
    <property type="term" value="F:catalytic activity, acting on a protein"/>
    <property type="evidence" value="ECO:0007669"/>
    <property type="project" value="UniProtKB-ARBA"/>
</dbReference>
<dbReference type="GO" id="GO:0016740">
    <property type="term" value="F:transferase activity"/>
    <property type="evidence" value="ECO:0007669"/>
    <property type="project" value="UniProtKB-ARBA"/>
</dbReference>
<dbReference type="GO" id="GO:0070981">
    <property type="term" value="P:L-asparagine biosynthetic process"/>
    <property type="evidence" value="ECO:0007669"/>
    <property type="project" value="UniProtKB-UniRule"/>
</dbReference>
<dbReference type="CDD" id="cd00645">
    <property type="entry name" value="AsnA"/>
    <property type="match status" value="1"/>
</dbReference>
<dbReference type="Gene3D" id="3.30.930.10">
    <property type="entry name" value="Bira Bifunctional Protein, Domain 2"/>
    <property type="match status" value="1"/>
</dbReference>
<dbReference type="HAMAP" id="MF_00555">
    <property type="entry name" value="AsnA"/>
    <property type="match status" value="1"/>
</dbReference>
<dbReference type="InterPro" id="IPR006195">
    <property type="entry name" value="aa-tRNA-synth_II"/>
</dbReference>
<dbReference type="InterPro" id="IPR045864">
    <property type="entry name" value="aa-tRNA-synth_II/BPL/LPL"/>
</dbReference>
<dbReference type="InterPro" id="IPR004618">
    <property type="entry name" value="AsnA"/>
</dbReference>
<dbReference type="NCBIfam" id="TIGR00669">
    <property type="entry name" value="asnA"/>
    <property type="match status" value="1"/>
</dbReference>
<dbReference type="PANTHER" id="PTHR30073">
    <property type="entry name" value="ASPARTATE--AMMONIA LIGASE"/>
    <property type="match status" value="1"/>
</dbReference>
<dbReference type="PANTHER" id="PTHR30073:SF5">
    <property type="entry name" value="ASPARTATE--AMMONIA LIGASE"/>
    <property type="match status" value="1"/>
</dbReference>
<dbReference type="Pfam" id="PF03590">
    <property type="entry name" value="AsnA"/>
    <property type="match status" value="1"/>
</dbReference>
<dbReference type="PIRSF" id="PIRSF001555">
    <property type="entry name" value="Asp_ammon_ligase"/>
    <property type="match status" value="1"/>
</dbReference>
<dbReference type="SUPFAM" id="SSF55681">
    <property type="entry name" value="Class II aaRS and biotin synthetases"/>
    <property type="match status" value="1"/>
</dbReference>
<dbReference type="PROSITE" id="PS50862">
    <property type="entry name" value="AA_TRNA_LIGASE_II"/>
    <property type="match status" value="1"/>
</dbReference>
<name>ASNA_LACDB</name>
<gene>
    <name evidence="1" type="primary">asnA</name>
    <name type="ordered locus">LBUL_1110</name>
</gene>
<proteinExistence type="inferred from homology"/>
<protein>
    <recommendedName>
        <fullName evidence="1">Aspartate--ammonia ligase</fullName>
        <ecNumber evidence="1">6.3.1.1</ecNumber>
    </recommendedName>
    <alternativeName>
        <fullName evidence="1">Asparagine synthetase A</fullName>
    </alternativeName>
</protein>
<evidence type="ECO:0000255" key="1">
    <source>
        <dbReference type="HAMAP-Rule" id="MF_00555"/>
    </source>
</evidence>
<comment type="catalytic activity">
    <reaction evidence="1">
        <text>L-aspartate + NH4(+) + ATP = L-asparagine + AMP + diphosphate + H(+)</text>
        <dbReference type="Rhea" id="RHEA:11372"/>
        <dbReference type="ChEBI" id="CHEBI:15378"/>
        <dbReference type="ChEBI" id="CHEBI:28938"/>
        <dbReference type="ChEBI" id="CHEBI:29991"/>
        <dbReference type="ChEBI" id="CHEBI:30616"/>
        <dbReference type="ChEBI" id="CHEBI:33019"/>
        <dbReference type="ChEBI" id="CHEBI:58048"/>
        <dbReference type="ChEBI" id="CHEBI:456215"/>
        <dbReference type="EC" id="6.3.1.1"/>
    </reaction>
</comment>
<comment type="pathway">
    <text evidence="1">Amino-acid biosynthesis; L-asparagine biosynthesis; L-asparagine from L-aspartate (ammonia route): step 1/1.</text>
</comment>
<comment type="subcellular location">
    <subcellularLocation>
        <location evidence="1">Cytoplasm</location>
    </subcellularLocation>
</comment>
<comment type="similarity">
    <text evidence="1">Belongs to the class-II aminoacyl-tRNA synthetase family. AsnA subfamily.</text>
</comment>
<feature type="chain" id="PRO_1000017952" description="Aspartate--ammonia ligase">
    <location>
        <begin position="1"/>
        <end position="338"/>
    </location>
</feature>
<organism>
    <name type="scientific">Lactobacillus delbrueckii subsp. bulgaricus (strain ATCC BAA-365 / Lb-18)</name>
    <dbReference type="NCBI Taxonomy" id="321956"/>
    <lineage>
        <taxon>Bacteria</taxon>
        <taxon>Bacillati</taxon>
        <taxon>Bacillota</taxon>
        <taxon>Bacilli</taxon>
        <taxon>Lactobacillales</taxon>
        <taxon>Lactobacillaceae</taxon>
        <taxon>Lactobacillus</taxon>
    </lineage>
</organism>
<keyword id="KW-0028">Amino-acid biosynthesis</keyword>
<keyword id="KW-0061">Asparagine biosynthesis</keyword>
<keyword id="KW-0067">ATP-binding</keyword>
<keyword id="KW-0963">Cytoplasm</keyword>
<keyword id="KW-0436">Ligase</keyword>
<keyword id="KW-0547">Nucleotide-binding</keyword>
<reference key="1">
    <citation type="journal article" date="2006" name="Proc. Natl. Acad. Sci. U.S.A.">
        <title>Comparative genomics of the lactic acid bacteria.</title>
        <authorList>
            <person name="Makarova K.S."/>
            <person name="Slesarev A."/>
            <person name="Wolf Y.I."/>
            <person name="Sorokin A."/>
            <person name="Mirkin B."/>
            <person name="Koonin E.V."/>
            <person name="Pavlov A."/>
            <person name="Pavlova N."/>
            <person name="Karamychev V."/>
            <person name="Polouchine N."/>
            <person name="Shakhova V."/>
            <person name="Grigoriev I."/>
            <person name="Lou Y."/>
            <person name="Rohksar D."/>
            <person name="Lucas S."/>
            <person name="Huang K."/>
            <person name="Goodstein D.M."/>
            <person name="Hawkins T."/>
            <person name="Plengvidhya V."/>
            <person name="Welker D."/>
            <person name="Hughes J."/>
            <person name="Goh Y."/>
            <person name="Benson A."/>
            <person name="Baldwin K."/>
            <person name="Lee J.-H."/>
            <person name="Diaz-Muniz I."/>
            <person name="Dosti B."/>
            <person name="Smeianov V."/>
            <person name="Wechter W."/>
            <person name="Barabote R."/>
            <person name="Lorca G."/>
            <person name="Altermann E."/>
            <person name="Barrangou R."/>
            <person name="Ganesan B."/>
            <person name="Xie Y."/>
            <person name="Rawsthorne H."/>
            <person name="Tamir D."/>
            <person name="Parker C."/>
            <person name="Breidt F."/>
            <person name="Broadbent J.R."/>
            <person name="Hutkins R."/>
            <person name="O'Sullivan D."/>
            <person name="Steele J."/>
            <person name="Unlu G."/>
            <person name="Saier M.H. Jr."/>
            <person name="Klaenhammer T."/>
            <person name="Richardson P."/>
            <person name="Kozyavkin S."/>
            <person name="Weimer B.C."/>
            <person name="Mills D.A."/>
        </authorList>
    </citation>
    <scope>NUCLEOTIDE SEQUENCE [LARGE SCALE GENOMIC DNA]</scope>
    <source>
        <strain>ATCC BAA-365 / Lb-18</strain>
    </source>
</reference>
<sequence length="338" mass="38770">MAKLIIPSDYDPKMTIRETEKAIRYIRETFQTEFGTAMNLERISAPMFVKKSSGLNDNLSGWEKPVSFTLHDGNEGELQIVHSLAKWKRWALKHYGFSHGEGLFTNMNAIRKDEEVLDNLHSVYVDQWDWEKVIDKSERTEATLRQTVQRIFETIKGMEYHVRALYPQAAYHLPEEISFVTSEELEARWPSLTPSEREDKICQEKGAVFLEHIGGALPLSKKPHDLRAPDYDDWTLNGDLLFWYEPLQRAFEVSSMGIRVDEDRLQEQLKLAGAEDRLDLPFHQALLKGDLPYSIGGGIGQSRLCMLLLGKAHIGEVQASIWPDEIVEKCQAAKIQLL</sequence>